<comment type="function">
    <text evidence="1">Hydrolyzes ribosome-free peptidyl-tRNAs (with 1 or more amino acids incorporated), which drop off the ribosome during protein synthesis, or as a result of ribosome stalling.</text>
</comment>
<comment type="function">
    <text evidence="1">Catalyzes the release of premature peptidyl moieties from peptidyl-tRNA molecules trapped in stalled 50S ribosomal subunits, and thus maintains levels of free tRNAs and 50S ribosomes.</text>
</comment>
<comment type="catalytic activity">
    <reaction evidence="1">
        <text>an N-acyl-L-alpha-aminoacyl-tRNA + H2O = an N-acyl-L-amino acid + a tRNA + H(+)</text>
        <dbReference type="Rhea" id="RHEA:54448"/>
        <dbReference type="Rhea" id="RHEA-COMP:10123"/>
        <dbReference type="Rhea" id="RHEA-COMP:13883"/>
        <dbReference type="ChEBI" id="CHEBI:15377"/>
        <dbReference type="ChEBI" id="CHEBI:15378"/>
        <dbReference type="ChEBI" id="CHEBI:59874"/>
        <dbReference type="ChEBI" id="CHEBI:78442"/>
        <dbReference type="ChEBI" id="CHEBI:138191"/>
        <dbReference type="EC" id="3.1.1.29"/>
    </reaction>
</comment>
<comment type="subunit">
    <text evidence="1">Monomer.</text>
</comment>
<comment type="subcellular location">
    <subcellularLocation>
        <location evidence="1">Cytoplasm</location>
    </subcellularLocation>
</comment>
<comment type="similarity">
    <text evidence="1">Belongs to the PTH family.</text>
</comment>
<name>PTH_LISW6</name>
<organism>
    <name type="scientific">Listeria welshimeri serovar 6b (strain ATCC 35897 / DSM 20650 / CCUG 15529 / CIP 8149 / NCTC 11857 / SLCC 5334 / V8)</name>
    <dbReference type="NCBI Taxonomy" id="386043"/>
    <lineage>
        <taxon>Bacteria</taxon>
        <taxon>Bacillati</taxon>
        <taxon>Bacillota</taxon>
        <taxon>Bacilli</taxon>
        <taxon>Bacillales</taxon>
        <taxon>Listeriaceae</taxon>
        <taxon>Listeria</taxon>
    </lineage>
</organism>
<feature type="chain" id="PRO_1000010608" description="Peptidyl-tRNA hydrolase">
    <location>
        <begin position="1"/>
        <end position="184"/>
    </location>
</feature>
<feature type="active site" description="Proton acceptor" evidence="1">
    <location>
        <position position="19"/>
    </location>
</feature>
<feature type="binding site" evidence="1">
    <location>
        <position position="14"/>
    </location>
    <ligand>
        <name>tRNA</name>
        <dbReference type="ChEBI" id="CHEBI:17843"/>
    </ligand>
</feature>
<feature type="binding site" evidence="1">
    <location>
        <position position="64"/>
    </location>
    <ligand>
        <name>tRNA</name>
        <dbReference type="ChEBI" id="CHEBI:17843"/>
    </ligand>
</feature>
<feature type="binding site" evidence="1">
    <location>
        <position position="66"/>
    </location>
    <ligand>
        <name>tRNA</name>
        <dbReference type="ChEBI" id="CHEBI:17843"/>
    </ligand>
</feature>
<feature type="binding site" evidence="1">
    <location>
        <position position="112"/>
    </location>
    <ligand>
        <name>tRNA</name>
        <dbReference type="ChEBI" id="CHEBI:17843"/>
    </ligand>
</feature>
<feature type="site" description="Discriminates between blocked and unblocked aminoacyl-tRNA" evidence="1">
    <location>
        <position position="9"/>
    </location>
</feature>
<feature type="site" description="Stabilizes the basic form of H active site to accept a proton" evidence="1">
    <location>
        <position position="91"/>
    </location>
</feature>
<evidence type="ECO:0000255" key="1">
    <source>
        <dbReference type="HAMAP-Rule" id="MF_00083"/>
    </source>
</evidence>
<dbReference type="EC" id="3.1.1.29" evidence="1"/>
<dbReference type="EMBL" id="AM263198">
    <property type="protein sequence ID" value="CAK19593.1"/>
    <property type="molecule type" value="Genomic_DNA"/>
</dbReference>
<dbReference type="RefSeq" id="WP_011701041.1">
    <property type="nucleotide sequence ID" value="NC_008555.1"/>
</dbReference>
<dbReference type="SMR" id="A0AF11"/>
<dbReference type="STRING" id="386043.lwe0175"/>
<dbReference type="GeneID" id="61188055"/>
<dbReference type="KEGG" id="lwe:lwe0175"/>
<dbReference type="eggNOG" id="COG0193">
    <property type="taxonomic scope" value="Bacteria"/>
</dbReference>
<dbReference type="HOGENOM" id="CLU_062456_4_1_9"/>
<dbReference type="OrthoDB" id="9800507at2"/>
<dbReference type="Proteomes" id="UP000000779">
    <property type="component" value="Chromosome"/>
</dbReference>
<dbReference type="GO" id="GO:0005737">
    <property type="term" value="C:cytoplasm"/>
    <property type="evidence" value="ECO:0007669"/>
    <property type="project" value="UniProtKB-SubCell"/>
</dbReference>
<dbReference type="GO" id="GO:0004045">
    <property type="term" value="F:peptidyl-tRNA hydrolase activity"/>
    <property type="evidence" value="ECO:0007669"/>
    <property type="project" value="UniProtKB-UniRule"/>
</dbReference>
<dbReference type="GO" id="GO:0000049">
    <property type="term" value="F:tRNA binding"/>
    <property type="evidence" value="ECO:0007669"/>
    <property type="project" value="UniProtKB-UniRule"/>
</dbReference>
<dbReference type="GO" id="GO:0006515">
    <property type="term" value="P:protein quality control for misfolded or incompletely synthesized proteins"/>
    <property type="evidence" value="ECO:0007669"/>
    <property type="project" value="UniProtKB-UniRule"/>
</dbReference>
<dbReference type="GO" id="GO:0072344">
    <property type="term" value="P:rescue of stalled ribosome"/>
    <property type="evidence" value="ECO:0007669"/>
    <property type="project" value="UniProtKB-UniRule"/>
</dbReference>
<dbReference type="CDD" id="cd00462">
    <property type="entry name" value="PTH"/>
    <property type="match status" value="1"/>
</dbReference>
<dbReference type="FunFam" id="3.40.50.1470:FF:000001">
    <property type="entry name" value="Peptidyl-tRNA hydrolase"/>
    <property type="match status" value="1"/>
</dbReference>
<dbReference type="Gene3D" id="3.40.50.1470">
    <property type="entry name" value="Peptidyl-tRNA hydrolase"/>
    <property type="match status" value="1"/>
</dbReference>
<dbReference type="HAMAP" id="MF_00083">
    <property type="entry name" value="Pept_tRNA_hydro_bact"/>
    <property type="match status" value="1"/>
</dbReference>
<dbReference type="InterPro" id="IPR001328">
    <property type="entry name" value="Pept_tRNA_hydro"/>
</dbReference>
<dbReference type="InterPro" id="IPR018171">
    <property type="entry name" value="Pept_tRNA_hydro_CS"/>
</dbReference>
<dbReference type="InterPro" id="IPR036416">
    <property type="entry name" value="Pept_tRNA_hydro_sf"/>
</dbReference>
<dbReference type="NCBIfam" id="TIGR00447">
    <property type="entry name" value="pth"/>
    <property type="match status" value="1"/>
</dbReference>
<dbReference type="PANTHER" id="PTHR17224">
    <property type="entry name" value="PEPTIDYL-TRNA HYDROLASE"/>
    <property type="match status" value="1"/>
</dbReference>
<dbReference type="PANTHER" id="PTHR17224:SF1">
    <property type="entry name" value="PEPTIDYL-TRNA HYDROLASE"/>
    <property type="match status" value="1"/>
</dbReference>
<dbReference type="Pfam" id="PF01195">
    <property type="entry name" value="Pept_tRNA_hydro"/>
    <property type="match status" value="1"/>
</dbReference>
<dbReference type="SUPFAM" id="SSF53178">
    <property type="entry name" value="Peptidyl-tRNA hydrolase-like"/>
    <property type="match status" value="1"/>
</dbReference>
<dbReference type="PROSITE" id="PS01195">
    <property type="entry name" value="PEPT_TRNA_HYDROL_1"/>
    <property type="match status" value="1"/>
</dbReference>
<dbReference type="PROSITE" id="PS01196">
    <property type="entry name" value="PEPT_TRNA_HYDROL_2"/>
    <property type="match status" value="1"/>
</dbReference>
<proteinExistence type="inferred from homology"/>
<accession>A0AF11</accession>
<sequence length="184" mass="20751">MKLIAGLGNPGKKYERTRHNVGFMVVDELSFRHQTPWKKSKFNGMVSEINVGGEKMILVKPLTFMNASGECIRPLMDYYNIQVEDVLIVYDDLDLPVGKIRLRQKGSAGGHNGMKSIIQHIKTQEFNRIRVGVSRPLKGEVINYVLGDFPKAEQPDIIAAIQKSADAIEDFAQVPFVEVMNKYN</sequence>
<gene>
    <name evidence="1" type="primary">pth</name>
    <name type="ordered locus">lwe0175</name>
</gene>
<reference key="1">
    <citation type="journal article" date="2006" name="J. Bacteriol.">
        <title>Whole-genome sequence of Listeria welshimeri reveals common steps in genome reduction with Listeria innocua as compared to Listeria monocytogenes.</title>
        <authorList>
            <person name="Hain T."/>
            <person name="Steinweg C."/>
            <person name="Kuenne C.T."/>
            <person name="Billion A."/>
            <person name="Ghai R."/>
            <person name="Chatterjee S.S."/>
            <person name="Domann E."/>
            <person name="Kaerst U."/>
            <person name="Goesmann A."/>
            <person name="Bekel T."/>
            <person name="Bartels D."/>
            <person name="Kaiser O."/>
            <person name="Meyer F."/>
            <person name="Puehler A."/>
            <person name="Weisshaar B."/>
            <person name="Wehland J."/>
            <person name="Liang C."/>
            <person name="Dandekar T."/>
            <person name="Lampidis R."/>
            <person name="Kreft J."/>
            <person name="Goebel W."/>
            <person name="Chakraborty T."/>
        </authorList>
    </citation>
    <scope>NUCLEOTIDE SEQUENCE [LARGE SCALE GENOMIC DNA]</scope>
    <source>
        <strain>ATCC 35897 / DSM 20650 / CCUG 15529 / CIP 8149 / NCTC 11857 / SLCC 5334 / V8</strain>
    </source>
</reference>
<protein>
    <recommendedName>
        <fullName evidence="1">Peptidyl-tRNA hydrolase</fullName>
        <shortName evidence="1">Pth</shortName>
        <ecNumber evidence="1">3.1.1.29</ecNumber>
    </recommendedName>
</protein>
<keyword id="KW-0963">Cytoplasm</keyword>
<keyword id="KW-0378">Hydrolase</keyword>
<keyword id="KW-0694">RNA-binding</keyword>
<keyword id="KW-0820">tRNA-binding</keyword>